<name>TRI26_RAT</name>
<sequence length="542" mass="62631">MAVSAPLRSLEEEVTCSICLDYLRDPVTIDCGHVFCRSCTSDIRPISGNRPVCPLCKKPFKKENIRPVWQLASLVENIERLKVDNGKQPGELAREPQDMKLCERHQEKLHYYCEDDGKLLCVMCRESREHRPHTAVLVEKAALPHREKILNHLNTLRRDRDKIQGFQAKGEADILAALTKLQEQRQYIVAEFKQGHQFLKKREQHLLDQLATLEQLLTEGREKFKTRGVSELDRLTLVISELEGKARQPAAELMQLSDRLSCLSLRYPRKKFWIGKAIPHMVKRKAGEFSDKLLSLQRGLRQFQGKLLRDLEYKTVSVTLDPQSASGYLQLSEDWKCITYTGQYQSDCLLPQQFDCEPGVLGSKGFTWGKVYWEVELEREGWSEDEEEGEEEEEGEEEEEDEEPGYGDRYEDWETDEEDESLGEEEEEEEEEEEEVQESCMVGVAKDSVKRKGNLSLRPEDGVWALRLSPSGIWANTSPEAQLFPVLRPRRVGIALDYEGGTVTFTNAESQELIYTFTTTFTRRLVPFLWLKWPEARLLLRP</sequence>
<evidence type="ECO:0000250" key="1">
    <source>
        <dbReference type="UniProtKB" id="Q12899"/>
    </source>
</evidence>
<evidence type="ECO:0000250" key="2">
    <source>
        <dbReference type="UniProtKB" id="Q99PN3"/>
    </source>
</evidence>
<evidence type="ECO:0000255" key="3"/>
<evidence type="ECO:0000255" key="4">
    <source>
        <dbReference type="PROSITE-ProRule" id="PRU00024"/>
    </source>
</evidence>
<evidence type="ECO:0000255" key="5">
    <source>
        <dbReference type="PROSITE-ProRule" id="PRU00175"/>
    </source>
</evidence>
<evidence type="ECO:0000255" key="6">
    <source>
        <dbReference type="PROSITE-ProRule" id="PRU00548"/>
    </source>
</evidence>
<evidence type="ECO:0000256" key="7">
    <source>
        <dbReference type="SAM" id="MobiDB-lite"/>
    </source>
</evidence>
<evidence type="ECO:0000305" key="8"/>
<accession>P62603</accession>
<accession>Q6MFZ0</accession>
<gene>
    <name type="primary">Trim26</name>
    <name type="synonym">Znf173</name>
</gene>
<organism>
    <name type="scientific">Rattus norvegicus</name>
    <name type="common">Rat</name>
    <dbReference type="NCBI Taxonomy" id="10116"/>
    <lineage>
        <taxon>Eukaryota</taxon>
        <taxon>Metazoa</taxon>
        <taxon>Chordata</taxon>
        <taxon>Craniata</taxon>
        <taxon>Vertebrata</taxon>
        <taxon>Euteleostomi</taxon>
        <taxon>Mammalia</taxon>
        <taxon>Eutheria</taxon>
        <taxon>Euarchontoglires</taxon>
        <taxon>Glires</taxon>
        <taxon>Rodentia</taxon>
        <taxon>Myomorpha</taxon>
        <taxon>Muroidea</taxon>
        <taxon>Muridae</taxon>
        <taxon>Murinae</taxon>
        <taxon>Rattus</taxon>
    </lineage>
</organism>
<comment type="function">
    <text evidence="1 2">E3 ubiquitin-protein ligase which regulates the IFN-beta production and antiviral response downstream of various DNA-encoded pattern-recognition receptors (PRRs). Also plays a central role in determining the response to different forms of oxidative stress by controlling levels of DNA glycosylases NEIL1, NEIL3 and NTH1 that are involved in repair of damaged DNA. Promotes nuclear IRF3 ubiquitination and proteasomal degradation. Bridges together TBK1 and NEMO during the innate response to viral infection leading to the activation of TBK1. Positively regulates LPS-mediated inflammatory innate immune response by catalyzing the 'Lys-11'-linked polyubiquitination of TAB1 to enhance its activation and subsequent NF-kappa-B and MAPK signaling. In a manner independent of its catalytic activity, inhibits WWP2, a SOX2-directed E3 ubiquitin ligase, and thus protects SOX2 from polyubiquitination and proteasomal degradation. Ubiquitinates the histone acetyltransferase protein complex component PHF20 and thereby triggers its degradation in the nucleus after its recruitment by the histone demethylase KDM6B, serving as a scaffold protein. Upon induction by TGF-beta, ubiquitinates the TFIID component TAF7 for proteasomal degradation (By similarity). Induces ferroptosis by ubiquitinating SLC7A11, a critical protein for lipid reactive oxygen species (ROS) scavenging (By similarity).</text>
</comment>
<comment type="catalytic activity">
    <reaction evidence="1">
        <text>S-ubiquitinyl-[E2 ubiquitin-conjugating enzyme]-L-cysteine + [acceptor protein]-L-lysine = [E2 ubiquitin-conjugating enzyme]-L-cysteine + N(6)-ubiquitinyl-[acceptor protein]-L-lysine.</text>
        <dbReference type="EC" id="2.3.2.27"/>
    </reaction>
</comment>
<comment type="subunit">
    <text evidence="1">Interacts with TBK1; this interaction bridges together TBK1 and NEMO in order to activate TBK1. Interacts with INCA1.</text>
</comment>
<comment type="subcellular location">
    <subcellularLocation>
        <location evidence="1">Cytoplasm</location>
    </subcellularLocation>
    <subcellularLocation>
        <location evidence="1">Nucleus</location>
    </subcellularLocation>
    <text evidence="1">Viral infection mediates TRIM26 nuclear translocation.</text>
</comment>
<comment type="PTM">
    <text evidence="1">Autoubiquitinates upon viral infection. In turn, autoubiquitinated TRIM26 recruits NEMO and bridges TBK1-NEMO interaction.</text>
</comment>
<comment type="similarity">
    <text evidence="8">Belongs to the TRIM/RBCC family.</text>
</comment>
<feature type="chain" id="PRO_0000056239" description="Tripartite motif-containing protein 26">
    <location>
        <begin position="1"/>
        <end position="542"/>
    </location>
</feature>
<feature type="domain" description="B30.2/SPRY" evidence="6">
    <location>
        <begin position="298"/>
        <end position="542"/>
    </location>
</feature>
<feature type="zinc finger region" description="RING-type" evidence="5">
    <location>
        <begin position="16"/>
        <end position="57"/>
    </location>
</feature>
<feature type="zinc finger region" description="B box-type" evidence="4">
    <location>
        <begin position="97"/>
        <end position="138"/>
    </location>
</feature>
<feature type="region of interest" description="Disordered" evidence="7">
    <location>
        <begin position="379"/>
        <end position="440"/>
    </location>
</feature>
<feature type="coiled-coil region" evidence="3">
    <location>
        <begin position="197"/>
        <end position="243"/>
    </location>
</feature>
<feature type="coiled-coil region" evidence="3">
    <location>
        <begin position="411"/>
        <end position="440"/>
    </location>
</feature>
<feature type="compositionally biased region" description="Acidic residues" evidence="7">
    <location>
        <begin position="383"/>
        <end position="405"/>
    </location>
</feature>
<feature type="compositionally biased region" description="Acidic residues" evidence="7">
    <location>
        <begin position="413"/>
        <end position="437"/>
    </location>
</feature>
<feature type="binding site" evidence="4">
    <location>
        <position position="102"/>
    </location>
    <ligand>
        <name>Zn(2+)</name>
        <dbReference type="ChEBI" id="CHEBI:29105"/>
    </ligand>
</feature>
<feature type="binding site" evidence="4">
    <location>
        <position position="105"/>
    </location>
    <ligand>
        <name>Zn(2+)</name>
        <dbReference type="ChEBI" id="CHEBI:29105"/>
    </ligand>
</feature>
<feature type="binding site" evidence="4">
    <location>
        <position position="124"/>
    </location>
    <ligand>
        <name>Zn(2+)</name>
        <dbReference type="ChEBI" id="CHEBI:29105"/>
    </ligand>
</feature>
<feature type="binding site" evidence="4">
    <location>
        <position position="130"/>
    </location>
    <ligand>
        <name>Zn(2+)</name>
        <dbReference type="ChEBI" id="CHEBI:29105"/>
    </ligand>
</feature>
<protein>
    <recommendedName>
        <fullName>Tripartite motif-containing protein 26</fullName>
        <ecNumber evidence="1">2.3.2.27</ecNumber>
    </recommendedName>
    <alternativeName>
        <fullName>Zinc finger protein 173</fullName>
    </alternativeName>
</protein>
<proteinExistence type="inferred from homology"/>
<keyword id="KW-0175">Coiled coil</keyword>
<keyword id="KW-0963">Cytoplasm</keyword>
<keyword id="KW-0391">Immunity</keyword>
<keyword id="KW-0399">Innate immunity</keyword>
<keyword id="KW-0479">Metal-binding</keyword>
<keyword id="KW-0539">Nucleus</keyword>
<keyword id="KW-1185">Reference proteome</keyword>
<keyword id="KW-0808">Transferase</keyword>
<keyword id="KW-0832">Ubl conjugation</keyword>
<keyword id="KW-0862">Zinc</keyword>
<keyword id="KW-0863">Zinc-finger</keyword>
<dbReference type="EC" id="2.3.2.27" evidence="1"/>
<dbReference type="EMBL" id="BX883051">
    <property type="protein sequence ID" value="CAE84057.1"/>
    <property type="molecule type" value="Genomic_DNA"/>
</dbReference>
<dbReference type="RefSeq" id="NP_001011665.1">
    <property type="nucleotide sequence ID" value="NM_001011665.4"/>
</dbReference>
<dbReference type="SMR" id="P62603"/>
<dbReference type="FunCoup" id="P62603">
    <property type="interactions" value="582"/>
</dbReference>
<dbReference type="STRING" id="10116.ENSRNOP00000068752"/>
<dbReference type="PhosphoSitePlus" id="P62603"/>
<dbReference type="jPOST" id="P62603"/>
<dbReference type="PaxDb" id="10116-ENSRNOP00000001019"/>
<dbReference type="Ensembl" id="ENSRNOT00000001019.7">
    <property type="protein sequence ID" value="ENSRNOP00000001019.4"/>
    <property type="gene ID" value="ENSRNOG00000032930.6"/>
</dbReference>
<dbReference type="GeneID" id="309586"/>
<dbReference type="KEGG" id="rno:309586"/>
<dbReference type="UCSC" id="RGD:1359126">
    <property type="organism name" value="rat"/>
</dbReference>
<dbReference type="AGR" id="RGD:1359126"/>
<dbReference type="CTD" id="7726"/>
<dbReference type="RGD" id="1359126">
    <property type="gene designation" value="Trim26"/>
</dbReference>
<dbReference type="eggNOG" id="KOG2177">
    <property type="taxonomic scope" value="Eukaryota"/>
</dbReference>
<dbReference type="GeneTree" id="ENSGT00940000158668"/>
<dbReference type="InParanoid" id="P62603"/>
<dbReference type="PRO" id="PR:P62603"/>
<dbReference type="Proteomes" id="UP000002494">
    <property type="component" value="Chromosome 20"/>
</dbReference>
<dbReference type="Bgee" id="ENSRNOG00000032930">
    <property type="expression patterns" value="Expressed in liver and 18 other cell types or tissues"/>
</dbReference>
<dbReference type="ExpressionAtlas" id="P62603">
    <property type="expression patterns" value="baseline and differential"/>
</dbReference>
<dbReference type="GO" id="GO:0005737">
    <property type="term" value="C:cytoplasm"/>
    <property type="evidence" value="ECO:0000266"/>
    <property type="project" value="RGD"/>
</dbReference>
<dbReference type="GO" id="GO:0005634">
    <property type="term" value="C:nucleus"/>
    <property type="evidence" value="ECO:0000266"/>
    <property type="project" value="RGD"/>
</dbReference>
<dbReference type="GO" id="GO:0061630">
    <property type="term" value="F:ubiquitin protein ligase activity"/>
    <property type="evidence" value="ECO:0000266"/>
    <property type="project" value="RGD"/>
</dbReference>
<dbReference type="GO" id="GO:0008270">
    <property type="term" value="F:zinc ion binding"/>
    <property type="evidence" value="ECO:0007669"/>
    <property type="project" value="UniProtKB-KW"/>
</dbReference>
<dbReference type="GO" id="GO:0046597">
    <property type="term" value="P:host-mediated suppression of symbiont invasion"/>
    <property type="evidence" value="ECO:0000266"/>
    <property type="project" value="RGD"/>
</dbReference>
<dbReference type="GO" id="GO:0045087">
    <property type="term" value="P:innate immune response"/>
    <property type="evidence" value="ECO:0000266"/>
    <property type="project" value="RGD"/>
</dbReference>
<dbReference type="GO" id="GO:1901224">
    <property type="term" value="P:positive regulation of non-canonical NF-kappaB signal transduction"/>
    <property type="evidence" value="ECO:0000266"/>
    <property type="project" value="RGD"/>
</dbReference>
<dbReference type="GO" id="GO:0043161">
    <property type="term" value="P:proteasome-mediated ubiquitin-dependent protein catabolic process"/>
    <property type="evidence" value="ECO:0000266"/>
    <property type="project" value="RGD"/>
</dbReference>
<dbReference type="GO" id="GO:0070979">
    <property type="term" value="P:protein K11-linked ubiquitination"/>
    <property type="evidence" value="ECO:0000266"/>
    <property type="project" value="RGD"/>
</dbReference>
<dbReference type="GO" id="GO:0044790">
    <property type="term" value="P:suppression of viral release by host"/>
    <property type="evidence" value="ECO:0000266"/>
    <property type="project" value="RGD"/>
</dbReference>
<dbReference type="CDD" id="cd19765">
    <property type="entry name" value="Bbox2_TRIM10-like"/>
    <property type="match status" value="1"/>
</dbReference>
<dbReference type="CDD" id="cd16598">
    <property type="entry name" value="RING-HC_TRIM26_C-IV"/>
    <property type="match status" value="1"/>
</dbReference>
<dbReference type="FunFam" id="2.60.120.920:FF:000039">
    <property type="entry name" value="Tripartite motif-containing protein 26"/>
    <property type="match status" value="1"/>
</dbReference>
<dbReference type="FunFam" id="3.30.160.60:FF:001212">
    <property type="entry name" value="Tripartite motif-containing protein 26"/>
    <property type="match status" value="1"/>
</dbReference>
<dbReference type="Gene3D" id="2.60.120.920">
    <property type="match status" value="2"/>
</dbReference>
<dbReference type="Gene3D" id="3.30.160.60">
    <property type="entry name" value="Classic Zinc Finger"/>
    <property type="match status" value="1"/>
</dbReference>
<dbReference type="Gene3D" id="3.30.40.10">
    <property type="entry name" value="Zinc/RING finger domain, C3HC4 (zinc finger)"/>
    <property type="match status" value="1"/>
</dbReference>
<dbReference type="InterPro" id="IPR001870">
    <property type="entry name" value="B30.2/SPRY"/>
</dbReference>
<dbReference type="InterPro" id="IPR043136">
    <property type="entry name" value="B30.2/SPRY_sf"/>
</dbReference>
<dbReference type="InterPro" id="IPR003879">
    <property type="entry name" value="Butyrophylin_SPRY"/>
</dbReference>
<dbReference type="InterPro" id="IPR013320">
    <property type="entry name" value="ConA-like_dom_sf"/>
</dbReference>
<dbReference type="InterPro" id="IPR006574">
    <property type="entry name" value="PRY"/>
</dbReference>
<dbReference type="InterPro" id="IPR003877">
    <property type="entry name" value="SPRY_dom"/>
</dbReference>
<dbReference type="InterPro" id="IPR050143">
    <property type="entry name" value="TRIM/RBCC"/>
</dbReference>
<dbReference type="InterPro" id="IPR000315">
    <property type="entry name" value="Znf_B-box"/>
</dbReference>
<dbReference type="InterPro" id="IPR001841">
    <property type="entry name" value="Znf_RING"/>
</dbReference>
<dbReference type="InterPro" id="IPR013083">
    <property type="entry name" value="Znf_RING/FYVE/PHD"/>
</dbReference>
<dbReference type="PANTHER" id="PTHR24103">
    <property type="entry name" value="E3 UBIQUITIN-PROTEIN LIGASE TRIM"/>
    <property type="match status" value="1"/>
</dbReference>
<dbReference type="Pfam" id="PF13765">
    <property type="entry name" value="PRY"/>
    <property type="match status" value="1"/>
</dbReference>
<dbReference type="Pfam" id="PF00622">
    <property type="entry name" value="SPRY"/>
    <property type="match status" value="1"/>
</dbReference>
<dbReference type="Pfam" id="PF00643">
    <property type="entry name" value="zf-B_box"/>
    <property type="match status" value="1"/>
</dbReference>
<dbReference type="Pfam" id="PF15227">
    <property type="entry name" value="zf-C3HC4_4"/>
    <property type="match status" value="1"/>
</dbReference>
<dbReference type="PRINTS" id="PR01407">
    <property type="entry name" value="BUTYPHLNCDUF"/>
</dbReference>
<dbReference type="SMART" id="SM00336">
    <property type="entry name" value="BBOX"/>
    <property type="match status" value="1"/>
</dbReference>
<dbReference type="SMART" id="SM00589">
    <property type="entry name" value="PRY"/>
    <property type="match status" value="1"/>
</dbReference>
<dbReference type="SMART" id="SM00184">
    <property type="entry name" value="RING"/>
    <property type="match status" value="1"/>
</dbReference>
<dbReference type="SMART" id="SM00449">
    <property type="entry name" value="SPRY"/>
    <property type="match status" value="1"/>
</dbReference>
<dbReference type="SUPFAM" id="SSF57845">
    <property type="entry name" value="B-box zinc-binding domain"/>
    <property type="match status" value="1"/>
</dbReference>
<dbReference type="SUPFAM" id="SSF49899">
    <property type="entry name" value="Concanavalin A-like lectins/glucanases"/>
    <property type="match status" value="2"/>
</dbReference>
<dbReference type="SUPFAM" id="SSF57850">
    <property type="entry name" value="RING/U-box"/>
    <property type="match status" value="1"/>
</dbReference>
<dbReference type="PROSITE" id="PS50188">
    <property type="entry name" value="B302_SPRY"/>
    <property type="match status" value="1"/>
</dbReference>
<dbReference type="PROSITE" id="PS50119">
    <property type="entry name" value="ZF_BBOX"/>
    <property type="match status" value="1"/>
</dbReference>
<dbReference type="PROSITE" id="PS50089">
    <property type="entry name" value="ZF_RING_2"/>
    <property type="match status" value="1"/>
</dbReference>
<reference key="1">
    <citation type="journal article" date="2004" name="Genome Res.">
        <title>The genomic sequence and comparative analysis of the rat major histocompatibility complex.</title>
        <authorList>
            <person name="Hurt P."/>
            <person name="Walter L."/>
            <person name="Sudbrak R."/>
            <person name="Klages S."/>
            <person name="Mueller I."/>
            <person name="Shiina T."/>
            <person name="Inoko H."/>
            <person name="Lehrach H."/>
            <person name="Guenther E."/>
            <person name="Reinhardt R."/>
            <person name="Himmelbauer H."/>
        </authorList>
    </citation>
    <scope>NUCLEOTIDE SEQUENCE [LARGE SCALE GENOMIC DNA]</scope>
    <source>
        <strain>Brown Norway</strain>
    </source>
</reference>